<protein>
    <recommendedName>
        <fullName evidence="1">Small ribosomal subunit protein uS2c</fullName>
    </recommendedName>
    <alternativeName>
        <fullName>30S ribosomal protein S2, chloroplastic</fullName>
    </alternativeName>
</protein>
<dbReference type="EMBL" id="AY958086">
    <property type="protein sequence ID" value="AAX45872.1"/>
    <property type="molecule type" value="Genomic_DNA"/>
</dbReference>
<dbReference type="RefSeq" id="YP_636476.1">
    <property type="nucleotide sequence ID" value="NC_008117.1"/>
</dbReference>
<dbReference type="SMR" id="Q32RQ0"/>
<dbReference type="GeneID" id="4108192"/>
<dbReference type="GO" id="GO:0009507">
    <property type="term" value="C:chloroplast"/>
    <property type="evidence" value="ECO:0007669"/>
    <property type="project" value="UniProtKB-SubCell"/>
</dbReference>
<dbReference type="GO" id="GO:0005763">
    <property type="term" value="C:mitochondrial small ribosomal subunit"/>
    <property type="evidence" value="ECO:0007669"/>
    <property type="project" value="TreeGrafter"/>
</dbReference>
<dbReference type="GO" id="GO:0003735">
    <property type="term" value="F:structural constituent of ribosome"/>
    <property type="evidence" value="ECO:0007669"/>
    <property type="project" value="InterPro"/>
</dbReference>
<dbReference type="GO" id="GO:0006412">
    <property type="term" value="P:translation"/>
    <property type="evidence" value="ECO:0007669"/>
    <property type="project" value="UniProtKB-UniRule"/>
</dbReference>
<dbReference type="CDD" id="cd01425">
    <property type="entry name" value="RPS2"/>
    <property type="match status" value="1"/>
</dbReference>
<dbReference type="FunFam" id="1.10.287.610:FF:000001">
    <property type="entry name" value="30S ribosomal protein S2"/>
    <property type="match status" value="1"/>
</dbReference>
<dbReference type="Gene3D" id="3.40.50.10490">
    <property type="entry name" value="Glucose-6-phosphate isomerase like protein, domain 1"/>
    <property type="match status" value="1"/>
</dbReference>
<dbReference type="Gene3D" id="1.10.287.610">
    <property type="entry name" value="Helix hairpin bin"/>
    <property type="match status" value="1"/>
</dbReference>
<dbReference type="HAMAP" id="MF_00291_B">
    <property type="entry name" value="Ribosomal_uS2_B"/>
    <property type="match status" value="1"/>
</dbReference>
<dbReference type="InterPro" id="IPR001865">
    <property type="entry name" value="Ribosomal_uS2"/>
</dbReference>
<dbReference type="InterPro" id="IPR005706">
    <property type="entry name" value="Ribosomal_uS2_bac/mit/plastid"/>
</dbReference>
<dbReference type="InterPro" id="IPR018130">
    <property type="entry name" value="Ribosomal_uS2_CS"/>
</dbReference>
<dbReference type="InterPro" id="IPR023591">
    <property type="entry name" value="Ribosomal_uS2_flav_dom_sf"/>
</dbReference>
<dbReference type="NCBIfam" id="TIGR01011">
    <property type="entry name" value="rpsB_bact"/>
    <property type="match status" value="1"/>
</dbReference>
<dbReference type="PANTHER" id="PTHR12534">
    <property type="entry name" value="30S RIBOSOMAL PROTEIN S2 PROKARYOTIC AND ORGANELLAR"/>
    <property type="match status" value="1"/>
</dbReference>
<dbReference type="PANTHER" id="PTHR12534:SF0">
    <property type="entry name" value="SMALL RIBOSOMAL SUBUNIT PROTEIN US2M"/>
    <property type="match status" value="1"/>
</dbReference>
<dbReference type="Pfam" id="PF00318">
    <property type="entry name" value="Ribosomal_S2"/>
    <property type="match status" value="1"/>
</dbReference>
<dbReference type="PRINTS" id="PR00395">
    <property type="entry name" value="RIBOSOMALS2"/>
</dbReference>
<dbReference type="SUPFAM" id="SSF52313">
    <property type="entry name" value="Ribosomal protein S2"/>
    <property type="match status" value="1"/>
</dbReference>
<dbReference type="PROSITE" id="PS00962">
    <property type="entry name" value="RIBOSOMAL_S2_1"/>
    <property type="match status" value="1"/>
</dbReference>
<sequence length="235" mass="26906">MKEENWNNNLEQMMEAGVHFGHQARKWNPKIAPYLLKDTKKIRIIHITHTARLLADACDFATNAAREGKQFMLVGTRYQTAGLVATTAKKARCHYVNTKWLGGMLTNWSTIKTRLQKFEQLEAQEIAGAFNHLPKKEVAVMKRQLSQLRKYFHGIKYMKKVPDIVIFINQHQDYTAIQECIKLGIPTIGLVDTDCDPNLVDMPIPANDDNRTSIRWILSQLTTAIKEGRSTSLKQ</sequence>
<name>RR2_ZYGCR</name>
<accession>Q32RQ0</accession>
<geneLocation type="chloroplast"/>
<reference key="1">
    <citation type="journal article" date="2005" name="BMC Biol.">
        <title>The complete chloroplast DNA sequences of the charophycean green algae Staurastrum and Zygnema reveal that the chloroplast genome underwent extensive changes during the evolution of the Zygnematales.</title>
        <authorList>
            <person name="Turmel M."/>
            <person name="Otis C."/>
            <person name="Lemieux C."/>
        </authorList>
    </citation>
    <scope>NUCLEOTIDE SEQUENCE [LARGE SCALE GENOMIC DNA]</scope>
</reference>
<gene>
    <name type="primary">rps2</name>
</gene>
<comment type="subcellular location">
    <subcellularLocation>
        <location>Plastid</location>
        <location>Chloroplast</location>
    </subcellularLocation>
</comment>
<comment type="similarity">
    <text evidence="1">Belongs to the universal ribosomal protein uS2 family.</text>
</comment>
<evidence type="ECO:0000305" key="1"/>
<proteinExistence type="inferred from homology"/>
<keyword id="KW-0150">Chloroplast</keyword>
<keyword id="KW-0934">Plastid</keyword>
<keyword id="KW-0687">Ribonucleoprotein</keyword>
<keyword id="KW-0689">Ribosomal protein</keyword>
<organism>
    <name type="scientific">Zygnema circumcarinatum</name>
    <name type="common">Green alga</name>
    <dbReference type="NCBI Taxonomy" id="35869"/>
    <lineage>
        <taxon>Eukaryota</taxon>
        <taxon>Viridiplantae</taxon>
        <taxon>Streptophyta</taxon>
        <taxon>Zygnematophyceae</taxon>
        <taxon>Zygnematophycidae</taxon>
        <taxon>Zygnematales</taxon>
        <taxon>Zygnemataceae</taxon>
        <taxon>Zygnema</taxon>
    </lineage>
</organism>
<feature type="chain" id="PRO_0000352164" description="Small ribosomal subunit protein uS2c">
    <location>
        <begin position="1"/>
        <end position="235"/>
    </location>
</feature>